<name>HICB2_PHOLL</name>
<sequence>MSKNMRYPVKFEHDETGWAVMFPDIPEALTGGDTREEALAMAQDALVTAFDFYFEDRREIPTPSTKGEAFVEVPASIAAKVLLLNTMLQTRTSNAELARLLGTRPQEIQRIVSLSHSTKIDTIANALNALGKHLELVAI</sequence>
<evidence type="ECO:0000250" key="1"/>
<evidence type="ECO:0000305" key="2"/>
<dbReference type="EMBL" id="BX571873">
    <property type="protein sequence ID" value="CAE16726.1"/>
    <property type="molecule type" value="Genomic_DNA"/>
</dbReference>
<dbReference type="SMR" id="Q7MZD8"/>
<dbReference type="STRING" id="243265.plu4354"/>
<dbReference type="KEGG" id="plu:plu4354"/>
<dbReference type="eggNOG" id="COG1598">
    <property type="taxonomic scope" value="Bacteria"/>
</dbReference>
<dbReference type="HOGENOM" id="CLU_140890_2_0_6"/>
<dbReference type="Proteomes" id="UP000002514">
    <property type="component" value="Chromosome"/>
</dbReference>
<dbReference type="GO" id="GO:0003677">
    <property type="term" value="F:DNA binding"/>
    <property type="evidence" value="ECO:0007669"/>
    <property type="project" value="UniProtKB-KW"/>
</dbReference>
<dbReference type="Gene3D" id="3.30.160.250">
    <property type="match status" value="1"/>
</dbReference>
<dbReference type="InterPro" id="IPR031807">
    <property type="entry name" value="HicB-like"/>
</dbReference>
<dbReference type="InterPro" id="IPR010982">
    <property type="entry name" value="Lambda_DNA-bd_dom_sf"/>
</dbReference>
<dbReference type="InterPro" id="IPR051404">
    <property type="entry name" value="TA_system_antitoxin"/>
</dbReference>
<dbReference type="InterPro" id="IPR035069">
    <property type="entry name" value="TTHA1013/TTHA0281-like"/>
</dbReference>
<dbReference type="PANTHER" id="PTHR34504">
    <property type="entry name" value="ANTITOXIN HICB"/>
    <property type="match status" value="1"/>
</dbReference>
<dbReference type="PANTHER" id="PTHR34504:SF4">
    <property type="entry name" value="ANTITOXIN HICB"/>
    <property type="match status" value="1"/>
</dbReference>
<dbReference type="Pfam" id="PF15919">
    <property type="entry name" value="HicB_lk_antitox"/>
    <property type="match status" value="1"/>
</dbReference>
<dbReference type="SUPFAM" id="SSF47413">
    <property type="entry name" value="lambda repressor-like DNA-binding domains"/>
    <property type="match status" value="1"/>
</dbReference>
<dbReference type="SUPFAM" id="SSF143100">
    <property type="entry name" value="TTHA1013/TTHA0281-like"/>
    <property type="match status" value="1"/>
</dbReference>
<protein>
    <recommendedName>
        <fullName>Antitoxin HicB 2</fullName>
    </recommendedName>
</protein>
<organism>
    <name type="scientific">Photorhabdus laumondii subsp. laumondii (strain DSM 15139 / CIP 105565 / TT01)</name>
    <name type="common">Photorhabdus luminescens subsp. laumondii</name>
    <dbReference type="NCBI Taxonomy" id="243265"/>
    <lineage>
        <taxon>Bacteria</taxon>
        <taxon>Pseudomonadati</taxon>
        <taxon>Pseudomonadota</taxon>
        <taxon>Gammaproteobacteria</taxon>
        <taxon>Enterobacterales</taxon>
        <taxon>Morganellaceae</taxon>
        <taxon>Photorhabdus</taxon>
    </lineage>
</organism>
<gene>
    <name type="primary">hicB2</name>
    <name type="ordered locus">plu4354</name>
</gene>
<accession>Q7MZD8</accession>
<keyword id="KW-0238">DNA-binding</keyword>
<keyword id="KW-1185">Reference proteome</keyword>
<keyword id="KW-0678">Repressor</keyword>
<keyword id="KW-0346">Stress response</keyword>
<keyword id="KW-1277">Toxin-antitoxin system</keyword>
<keyword id="KW-0804">Transcription</keyword>
<keyword id="KW-0805">Transcription regulation</keyword>
<comment type="function">
    <text evidence="1">Antitoxin component of a type II toxin-antitoxin (TA) system. Functions as an mRNA interferase antitoxin preventing effects of the HicA 2 toxin (By similarity).</text>
</comment>
<comment type="subunit">
    <text evidence="1">Probably forms a complex with the probable mRNA interferase HicA2 (its cognate toxin); when complexed with HicA inhibits the toxin activity.</text>
</comment>
<comment type="similarity">
    <text evidence="2">Belongs to the HicB antitoxin family.</text>
</comment>
<proteinExistence type="inferred from homology"/>
<reference key="1">
    <citation type="journal article" date="2003" name="Nat. Biotechnol.">
        <title>The genome sequence of the entomopathogenic bacterium Photorhabdus luminescens.</title>
        <authorList>
            <person name="Duchaud E."/>
            <person name="Rusniok C."/>
            <person name="Frangeul L."/>
            <person name="Buchrieser C."/>
            <person name="Givaudan A."/>
            <person name="Taourit S."/>
            <person name="Bocs S."/>
            <person name="Boursaux-Eude C."/>
            <person name="Chandler M."/>
            <person name="Charles J.-F."/>
            <person name="Dassa E."/>
            <person name="Derose R."/>
            <person name="Derzelle S."/>
            <person name="Freyssinet G."/>
            <person name="Gaudriault S."/>
            <person name="Medigue C."/>
            <person name="Lanois A."/>
            <person name="Powell K."/>
            <person name="Siguier P."/>
            <person name="Vincent R."/>
            <person name="Wingate V."/>
            <person name="Zouine M."/>
            <person name="Glaser P."/>
            <person name="Boemare N."/>
            <person name="Danchin A."/>
            <person name="Kunst F."/>
        </authorList>
    </citation>
    <scope>NUCLEOTIDE SEQUENCE [LARGE SCALE GENOMIC DNA]</scope>
    <source>
        <strain>DSM 15139 / CIP 105565 / TT01</strain>
    </source>
</reference>
<feature type="chain" id="PRO_0000404521" description="Antitoxin HicB 2">
    <location>
        <begin position="1"/>
        <end position="139"/>
    </location>
</feature>
<feature type="domain" description="HTH cro/C1-type">
    <location>
        <begin position="87"/>
        <end position="137"/>
    </location>
</feature>
<feature type="DNA-binding region" description="H-T-H motif" evidence="1">
    <location>
        <begin position="96"/>
        <end position="113"/>
    </location>
</feature>